<accession>Q8LPW4</accession>
<dbReference type="EC" id="3.1.1.-"/>
<dbReference type="EMBL" id="AY033231">
    <property type="protein sequence ID" value="AAK56395.1"/>
    <property type="molecule type" value="mRNA"/>
</dbReference>
<dbReference type="PDB" id="1OXW">
    <property type="method" value="X-ray"/>
    <property type="resolution" value="2.20 A"/>
    <property type="chains" value="A/B/C=23-386"/>
</dbReference>
<dbReference type="PDB" id="4PK9">
    <property type="method" value="X-ray"/>
    <property type="resolution" value="1.96 A"/>
    <property type="chains" value="A=23-386"/>
</dbReference>
<dbReference type="PDB" id="4PKA">
    <property type="method" value="X-ray"/>
    <property type="resolution" value="2.60 A"/>
    <property type="chains" value="X=23-386"/>
</dbReference>
<dbReference type="PDB" id="4PKB">
    <property type="method" value="X-ray"/>
    <property type="resolution" value="2.09 A"/>
    <property type="chains" value="A=23-386"/>
</dbReference>
<dbReference type="PDBsum" id="1OXW"/>
<dbReference type="PDBsum" id="4PK9"/>
<dbReference type="PDBsum" id="4PKA"/>
<dbReference type="PDBsum" id="4PKB"/>
<dbReference type="SMR" id="Q8LPW4"/>
<dbReference type="EvolutionaryTrace" id="Q8LPW4"/>
<dbReference type="GO" id="GO:0005773">
    <property type="term" value="C:vacuole"/>
    <property type="evidence" value="ECO:0007669"/>
    <property type="project" value="UniProtKB-SubCell"/>
</dbReference>
<dbReference type="GO" id="GO:0047372">
    <property type="term" value="F:monoacylglycerol lipase activity"/>
    <property type="evidence" value="ECO:0007669"/>
    <property type="project" value="TreeGrafter"/>
</dbReference>
<dbReference type="GO" id="GO:0045735">
    <property type="term" value="F:nutrient reservoir activity"/>
    <property type="evidence" value="ECO:0007669"/>
    <property type="project" value="UniProtKB-KW"/>
</dbReference>
<dbReference type="GO" id="GO:0004620">
    <property type="term" value="F:phospholipase activity"/>
    <property type="evidence" value="ECO:0007669"/>
    <property type="project" value="TreeGrafter"/>
</dbReference>
<dbReference type="GO" id="GO:0006952">
    <property type="term" value="P:defense response"/>
    <property type="evidence" value="ECO:0007669"/>
    <property type="project" value="UniProtKB-KW"/>
</dbReference>
<dbReference type="GO" id="GO:0016042">
    <property type="term" value="P:lipid catabolic process"/>
    <property type="evidence" value="ECO:0007669"/>
    <property type="project" value="UniProtKB-KW"/>
</dbReference>
<dbReference type="CDD" id="cd07214">
    <property type="entry name" value="Pat17_isozyme_like"/>
    <property type="match status" value="1"/>
</dbReference>
<dbReference type="Gene3D" id="3.40.1090.10">
    <property type="entry name" value="Cytosolic phospholipase A2 catalytic domain"/>
    <property type="match status" value="1"/>
</dbReference>
<dbReference type="InterPro" id="IPR016035">
    <property type="entry name" value="Acyl_Trfase/lysoPLipase"/>
</dbReference>
<dbReference type="InterPro" id="IPR002641">
    <property type="entry name" value="PNPLA_dom"/>
</dbReference>
<dbReference type="PANTHER" id="PTHR32176:SF85">
    <property type="entry name" value="PATATIN GROUP D-2"/>
    <property type="match status" value="1"/>
</dbReference>
<dbReference type="PANTHER" id="PTHR32176">
    <property type="entry name" value="XYLOSE ISOMERASE"/>
    <property type="match status" value="1"/>
</dbReference>
<dbReference type="Pfam" id="PF01734">
    <property type="entry name" value="Patatin"/>
    <property type="match status" value="1"/>
</dbReference>
<dbReference type="SUPFAM" id="SSF52151">
    <property type="entry name" value="FabD/lysophospholipase-like"/>
    <property type="match status" value="1"/>
</dbReference>
<dbReference type="PROSITE" id="PS51635">
    <property type="entry name" value="PNPLA"/>
    <property type="match status" value="1"/>
</dbReference>
<evidence type="ECO:0000250" key="1"/>
<evidence type="ECO:0000255" key="2"/>
<evidence type="ECO:0000255" key="3">
    <source>
        <dbReference type="PROSITE-ProRule" id="PRU01161"/>
    </source>
</evidence>
<evidence type="ECO:0000269" key="4">
    <source>
    </source>
</evidence>
<evidence type="ECO:0000305" key="5"/>
<evidence type="ECO:0007829" key="6">
    <source>
        <dbReference type="PDB" id="4PK9"/>
    </source>
</evidence>
<feature type="signal peptide" evidence="2">
    <location>
        <begin position="1"/>
        <end position="23"/>
    </location>
</feature>
<feature type="chain" id="PRO_0000296714" description="Patatin-17">
    <location>
        <begin position="24"/>
        <end position="386"/>
    </location>
</feature>
<feature type="domain" description="PNPLA" evidence="3">
    <location>
        <begin position="32"/>
        <end position="229"/>
    </location>
</feature>
<feature type="coiled-coil region" evidence="2">
    <location>
        <begin position="321"/>
        <end position="384"/>
    </location>
</feature>
<feature type="short sequence motif" description="GXGXXG" evidence="3">
    <location>
        <begin position="36"/>
        <end position="41"/>
    </location>
</feature>
<feature type="short sequence motif" description="GXSXG" evidence="3">
    <location>
        <begin position="75"/>
        <end position="79"/>
    </location>
</feature>
<feature type="short sequence motif" description="DGA/G" evidence="3">
    <location>
        <begin position="215"/>
        <end position="217"/>
    </location>
</feature>
<feature type="active site" description="Nucleophile" evidence="3">
    <location>
        <position position="77"/>
    </location>
</feature>
<feature type="active site" description="Proton acceptor" evidence="3">
    <location>
        <position position="215"/>
    </location>
</feature>
<feature type="glycosylation site" description="N-linked (GlcNAc...) asparagine" evidence="2">
    <location>
        <position position="202"/>
    </location>
</feature>
<feature type="mutagenesis site" description="Loss of esterase activity and impaired insecticidal activity." evidence="4">
    <original>S</original>
    <variation>A</variation>
    <variation>D</variation>
    <variation>T</variation>
    <variation>N</variation>
    <variation>C</variation>
    <location>
        <position position="77"/>
    </location>
</feature>
<feature type="mutagenesis site" description="Loss of esterase activity and impaired insecticidal activity." evidence="4">
    <original>D</original>
    <variation>A</variation>
    <location>
        <position position="215"/>
    </location>
</feature>
<feature type="strand" evidence="6">
    <location>
        <begin position="29"/>
        <end position="34"/>
    </location>
</feature>
<feature type="helix" evidence="6">
    <location>
        <begin position="38"/>
        <end position="41"/>
    </location>
</feature>
<feature type="helix" evidence="6">
    <location>
        <begin position="42"/>
        <end position="58"/>
    </location>
</feature>
<feature type="helix" evidence="6">
    <location>
        <begin position="66"/>
        <end position="68"/>
    </location>
</feature>
<feature type="strand" evidence="6">
    <location>
        <begin position="71"/>
        <end position="75"/>
    </location>
</feature>
<feature type="helix" evidence="6">
    <location>
        <begin position="78"/>
        <end position="87"/>
    </location>
</feature>
<feature type="strand" evidence="6">
    <location>
        <begin position="93"/>
        <end position="97"/>
    </location>
</feature>
<feature type="helix" evidence="6">
    <location>
        <begin position="99"/>
        <end position="101"/>
    </location>
</feature>
<feature type="helix" evidence="6">
    <location>
        <begin position="102"/>
        <end position="113"/>
    </location>
</feature>
<feature type="strand" evidence="6">
    <location>
        <begin position="120"/>
        <end position="122"/>
    </location>
</feature>
<feature type="helix" evidence="6">
    <location>
        <begin position="128"/>
        <end position="138"/>
    </location>
</feature>
<feature type="helix" evidence="6">
    <location>
        <begin position="143"/>
        <end position="145"/>
    </location>
</feature>
<feature type="strand" evidence="6">
    <location>
        <begin position="147"/>
        <end position="156"/>
    </location>
</feature>
<feature type="turn" evidence="6">
    <location>
        <begin position="157"/>
        <end position="160"/>
    </location>
</feature>
<feature type="strand" evidence="6">
    <location>
        <begin position="161"/>
        <end position="165"/>
    </location>
</feature>
<feature type="turn" evidence="6">
    <location>
        <begin position="168"/>
        <end position="172"/>
    </location>
</feature>
<feature type="helix" evidence="6">
    <location>
        <begin position="174"/>
        <end position="176"/>
    </location>
</feature>
<feature type="helix" evidence="6">
    <location>
        <begin position="180"/>
        <end position="188"/>
    </location>
</feature>
<feature type="turn" evidence="6">
    <location>
        <begin position="191"/>
        <end position="193"/>
    </location>
</feature>
<feature type="strand" evidence="6">
    <location>
        <begin position="197"/>
        <end position="202"/>
    </location>
</feature>
<feature type="strand" evidence="6">
    <location>
        <begin position="208"/>
        <end position="215"/>
    </location>
</feature>
<feature type="helix" evidence="6">
    <location>
        <begin position="216"/>
        <end position="219"/>
    </location>
</feature>
<feature type="helix" evidence="6">
    <location>
        <begin position="225"/>
        <end position="235"/>
    </location>
</feature>
<feature type="turn" evidence="6">
    <location>
        <begin position="236"/>
        <end position="238"/>
    </location>
</feature>
<feature type="helix" evidence="6">
    <location>
        <begin position="240"/>
        <end position="245"/>
    </location>
</feature>
<feature type="helix" evidence="6">
    <location>
        <begin position="250"/>
        <end position="252"/>
    </location>
</feature>
<feature type="strand" evidence="6">
    <location>
        <begin position="253"/>
        <end position="258"/>
    </location>
</feature>
<feature type="helix" evidence="6">
    <location>
        <begin position="266"/>
        <end position="268"/>
    </location>
</feature>
<feature type="helix" evidence="6">
    <location>
        <begin position="272"/>
        <end position="275"/>
    </location>
</feature>
<feature type="helix" evidence="6">
    <location>
        <begin position="280"/>
        <end position="309"/>
    </location>
</feature>
<feature type="helix" evidence="6">
    <location>
        <begin position="313"/>
        <end position="315"/>
    </location>
</feature>
<feature type="strand" evidence="6">
    <location>
        <begin position="316"/>
        <end position="319"/>
    </location>
</feature>
<feature type="helix" evidence="6">
    <location>
        <begin position="326"/>
        <end position="329"/>
    </location>
</feature>
<feature type="helix" evidence="6">
    <location>
        <begin position="336"/>
        <end position="351"/>
    </location>
</feature>
<feature type="strand" evidence="6">
    <location>
        <begin position="352"/>
        <end position="355"/>
    </location>
</feature>
<feature type="strand" evidence="6">
    <location>
        <begin position="358"/>
        <end position="361"/>
    </location>
</feature>
<feature type="helix" evidence="6">
    <location>
        <begin position="362"/>
        <end position="381"/>
    </location>
</feature>
<proteinExistence type="evidence at protein level"/>
<name>PAT17_SOLCD</name>
<keyword id="KW-0002">3D-structure</keyword>
<keyword id="KW-0175">Coiled coil</keyword>
<keyword id="KW-0325">Glycoprotein</keyword>
<keyword id="KW-0378">Hydrolase</keyword>
<keyword id="KW-0442">Lipid degradation</keyword>
<keyword id="KW-0443">Lipid metabolism</keyword>
<keyword id="KW-0611">Plant defense</keyword>
<keyword id="KW-0732">Signal</keyword>
<keyword id="KW-0758">Storage protein</keyword>
<keyword id="KW-0926">Vacuole</keyword>
<sequence length="386" mass="42486">MATTKSFLILIFMILATTSSTFAQLGEMVTVLSIDGGGIRGIIPATILEFLEGQLQEMDNNADARLADYFDVIGGTSTGGLLTAMISTPNENNRPFAAAKEIVPFYFEHGPQIFNPSGQILGPKYDGKYLMQVLQEKLGETRVHQALTEVVISSFDIKTNKPVIFTKSNLANSPELDAKMYDISYSTAAAPTYFPPHYFVTNTSNGDEYEFNLVDGAVATVADPALLSISVATRLAQKDPAFASIRSLNYKKMLLLSLGTGTTSEFDKTYTAKEAATWTAVHWMLVIQKMTDAASSYMTDYYLSTAFQALDSKNNYLRVQENALTGTTTEMDDASEANMELLVQVGENLLKKPVSEDNPETYEEALKRFAKLLSDRKKLRANKASY</sequence>
<organism>
    <name type="scientific">Solanum cardiophyllum</name>
    <name type="common">Heartleaf nightshade</name>
    <name type="synonym">Solanum cardiophyllum Lindl.</name>
    <dbReference type="NCBI Taxonomy" id="160510"/>
    <lineage>
        <taxon>Eukaryota</taxon>
        <taxon>Viridiplantae</taxon>
        <taxon>Streptophyta</taxon>
        <taxon>Embryophyta</taxon>
        <taxon>Tracheophyta</taxon>
        <taxon>Spermatophyta</taxon>
        <taxon>Magnoliopsida</taxon>
        <taxon>eudicotyledons</taxon>
        <taxon>Gunneridae</taxon>
        <taxon>Pentapetalae</taxon>
        <taxon>asterids</taxon>
        <taxon>lamiids</taxon>
        <taxon>Solanales</taxon>
        <taxon>Solanaceae</taxon>
        <taxon>Solanoideae</taxon>
        <taxon>Solaneae</taxon>
        <taxon>Solanum</taxon>
    </lineage>
</organism>
<protein>
    <recommendedName>
        <fullName>Patatin-17</fullName>
        <ecNumber>3.1.1.-</ecNumber>
    </recommendedName>
</protein>
<comment type="function">
    <text evidence="1 4">Non-specific lipolytic acyl hydrolase (LAH), an activity which is thought to be involved in the response of tubers to pathogens (By similarity). Catalyzes the non-specific hydrolysis of phospholipids, glycolipids, sulfolipids, and mono- and diacylglycerols includng p-nitrophenyl caprate. Confers resistance to southern corn rootworm (SCRW).</text>
</comment>
<comment type="biophysicochemical properties">
    <kinetics>
        <KM evidence="4">0.26 mM for p-nitrophenyl caprate</KM>
    </kinetics>
    <phDependence>
        <text evidence="4">Optimum pH is 5-9.5.</text>
    </phDependence>
</comment>
<comment type="subcellular location">
    <subcellularLocation>
        <location evidence="1">Vacuole</location>
    </subcellularLocation>
</comment>
<comment type="domain">
    <text>The nitrogen atoms of the two glycine residues in the GGXR motif define the oxyanion hole, and stabilize the oxyanion that forms during the nucleophilic attack by the catalytic serine during substrate cleavage.</text>
</comment>
<comment type="miscellaneous">
    <text>Patatin have a dual role as a somatic storage protein and as an enzyme involved in host resistance.</text>
</comment>
<comment type="similarity">
    <text evidence="5">Belongs to the patatin family.</text>
</comment>
<reference key="1">
    <citation type="journal article" date="2003" name="Biochemistry">
        <title>The crystal structure, mutagenesis, and activity studies reveal that patatin is a lipid acyl hydrolase with a Ser-Asp catalytic dyad.</title>
        <authorList>
            <person name="Rydel T.J."/>
            <person name="Williams J.M."/>
            <person name="Krieger E."/>
            <person name="Moshiri F."/>
            <person name="Stallings W.C."/>
            <person name="Brown S.M."/>
            <person name="Pershing J.C."/>
            <person name="Purcell J.P."/>
            <person name="Alibhai M.F."/>
        </authorList>
    </citation>
    <scope>NUCLEOTIDE SEQUENCE [MRNA]</scope>
    <scope>X-RAY CRYSTALLOGRAPHY (2.2 ANGSTROMS) OF 23-386</scope>
    <scope>MUTAGENESIS OF SER-77 AND ASP-215</scope>
    <scope>FUNCTION</scope>
    <scope>BIOPHYSICOCHEMICAL PROPERTIES</scope>
</reference>